<reference key="1">
    <citation type="journal article" date="2011" name="J. Bacteriol.">
        <title>Complete genome sequence and updated annotation of Desulfovibrio alaskensis G20.</title>
        <authorList>
            <person name="Hauser L.J."/>
            <person name="Land M.L."/>
            <person name="Brown S.D."/>
            <person name="Larimer F."/>
            <person name="Keller K.L."/>
            <person name="Rapp-Giles B.J."/>
            <person name="Price M.N."/>
            <person name="Lin M."/>
            <person name="Bruce D.C."/>
            <person name="Detter J.C."/>
            <person name="Tapia R."/>
            <person name="Han C.S."/>
            <person name="Goodwin L.A."/>
            <person name="Cheng J.F."/>
            <person name="Pitluck S."/>
            <person name="Copeland A."/>
            <person name="Lucas S."/>
            <person name="Nolan M."/>
            <person name="Lapidus A.L."/>
            <person name="Palumbo A.V."/>
            <person name="Wall J.D."/>
        </authorList>
    </citation>
    <scope>NUCLEOTIDE SEQUENCE [LARGE SCALE GENOMIC DNA]</scope>
    <source>
        <strain>ATCC BAA-1058 / DSM 17464 / G20</strain>
    </source>
</reference>
<accession>Q30Z08</accession>
<organism>
    <name type="scientific">Oleidesulfovibrio alaskensis (strain ATCC BAA-1058 / DSM 17464 / G20)</name>
    <name type="common">Desulfovibrio alaskensis</name>
    <dbReference type="NCBI Taxonomy" id="207559"/>
    <lineage>
        <taxon>Bacteria</taxon>
        <taxon>Pseudomonadati</taxon>
        <taxon>Thermodesulfobacteriota</taxon>
        <taxon>Desulfovibrionia</taxon>
        <taxon>Desulfovibrionales</taxon>
        <taxon>Desulfovibrionaceae</taxon>
        <taxon>Oleidesulfovibrio</taxon>
    </lineage>
</organism>
<sequence>MRSIRIIAVGRLKTAHWKTAAEHYLTRLTRAFKVEETIIKDGNAALPPLERNAQEGARIVAALTPADLAVCMDETGRQFTSQQFSAFLTPMWENANLRPCFIIGGAYGLSDEVRGKARHTMALSAMTFPHEMARVVLYEQLYRADAILRGTPYHH</sequence>
<keyword id="KW-0963">Cytoplasm</keyword>
<keyword id="KW-0489">Methyltransferase</keyword>
<keyword id="KW-1185">Reference proteome</keyword>
<keyword id="KW-0698">rRNA processing</keyword>
<keyword id="KW-0949">S-adenosyl-L-methionine</keyword>
<keyword id="KW-0808">Transferase</keyword>
<dbReference type="EC" id="2.1.1.177" evidence="1"/>
<dbReference type="EMBL" id="CP000112">
    <property type="protein sequence ID" value="ABB39088.1"/>
    <property type="molecule type" value="Genomic_DNA"/>
</dbReference>
<dbReference type="RefSeq" id="WP_011368171.1">
    <property type="nucleotide sequence ID" value="NC_007519.1"/>
</dbReference>
<dbReference type="SMR" id="Q30Z08"/>
<dbReference type="STRING" id="207559.Dde_2291"/>
<dbReference type="KEGG" id="dde:Dde_2291"/>
<dbReference type="eggNOG" id="COG1576">
    <property type="taxonomic scope" value="Bacteria"/>
</dbReference>
<dbReference type="HOGENOM" id="CLU_100552_1_0_7"/>
<dbReference type="Proteomes" id="UP000002710">
    <property type="component" value="Chromosome"/>
</dbReference>
<dbReference type="GO" id="GO:0005737">
    <property type="term" value="C:cytoplasm"/>
    <property type="evidence" value="ECO:0007669"/>
    <property type="project" value="UniProtKB-SubCell"/>
</dbReference>
<dbReference type="GO" id="GO:0070038">
    <property type="term" value="F:rRNA (pseudouridine-N3-)-methyltransferase activity"/>
    <property type="evidence" value="ECO:0007669"/>
    <property type="project" value="UniProtKB-UniRule"/>
</dbReference>
<dbReference type="CDD" id="cd18081">
    <property type="entry name" value="RlmH-like"/>
    <property type="match status" value="1"/>
</dbReference>
<dbReference type="Gene3D" id="3.40.1280.10">
    <property type="match status" value="1"/>
</dbReference>
<dbReference type="HAMAP" id="MF_00658">
    <property type="entry name" value="23SrRNA_methyltr_H"/>
    <property type="match status" value="1"/>
</dbReference>
<dbReference type="InterPro" id="IPR029028">
    <property type="entry name" value="Alpha/beta_knot_MTases"/>
</dbReference>
<dbReference type="InterPro" id="IPR003742">
    <property type="entry name" value="RlmH-like"/>
</dbReference>
<dbReference type="InterPro" id="IPR029026">
    <property type="entry name" value="tRNA_m1G_MTases_N"/>
</dbReference>
<dbReference type="PANTHER" id="PTHR33603">
    <property type="entry name" value="METHYLTRANSFERASE"/>
    <property type="match status" value="1"/>
</dbReference>
<dbReference type="PANTHER" id="PTHR33603:SF1">
    <property type="entry name" value="RIBOSOMAL RNA LARGE SUBUNIT METHYLTRANSFERASE H"/>
    <property type="match status" value="1"/>
</dbReference>
<dbReference type="Pfam" id="PF02590">
    <property type="entry name" value="SPOUT_MTase"/>
    <property type="match status" value="1"/>
</dbReference>
<dbReference type="PIRSF" id="PIRSF004505">
    <property type="entry name" value="MT_bac"/>
    <property type="match status" value="1"/>
</dbReference>
<dbReference type="SUPFAM" id="SSF75217">
    <property type="entry name" value="alpha/beta knot"/>
    <property type="match status" value="1"/>
</dbReference>
<name>RLMH_OLEA2</name>
<evidence type="ECO:0000255" key="1">
    <source>
        <dbReference type="HAMAP-Rule" id="MF_00658"/>
    </source>
</evidence>
<feature type="chain" id="PRO_0000260553" description="Ribosomal RNA large subunit methyltransferase H">
    <location>
        <begin position="1"/>
        <end position="155"/>
    </location>
</feature>
<feature type="binding site" evidence="1">
    <location>
        <position position="104"/>
    </location>
    <ligand>
        <name>S-adenosyl-L-methionine</name>
        <dbReference type="ChEBI" id="CHEBI:59789"/>
    </ligand>
</feature>
<feature type="binding site" evidence="1">
    <location>
        <begin position="123"/>
        <end position="128"/>
    </location>
    <ligand>
        <name>S-adenosyl-L-methionine</name>
        <dbReference type="ChEBI" id="CHEBI:59789"/>
    </ligand>
</feature>
<comment type="function">
    <text evidence="1">Specifically methylates the pseudouridine at position 1915 (m3Psi1915) in 23S rRNA.</text>
</comment>
<comment type="catalytic activity">
    <reaction evidence="1">
        <text>pseudouridine(1915) in 23S rRNA + S-adenosyl-L-methionine = N(3)-methylpseudouridine(1915) in 23S rRNA + S-adenosyl-L-homocysteine + H(+)</text>
        <dbReference type="Rhea" id="RHEA:42752"/>
        <dbReference type="Rhea" id="RHEA-COMP:10221"/>
        <dbReference type="Rhea" id="RHEA-COMP:10222"/>
        <dbReference type="ChEBI" id="CHEBI:15378"/>
        <dbReference type="ChEBI" id="CHEBI:57856"/>
        <dbReference type="ChEBI" id="CHEBI:59789"/>
        <dbReference type="ChEBI" id="CHEBI:65314"/>
        <dbReference type="ChEBI" id="CHEBI:74486"/>
        <dbReference type="EC" id="2.1.1.177"/>
    </reaction>
</comment>
<comment type="subunit">
    <text evidence="1">Homodimer.</text>
</comment>
<comment type="subcellular location">
    <subcellularLocation>
        <location evidence="1">Cytoplasm</location>
    </subcellularLocation>
</comment>
<comment type="similarity">
    <text evidence="1">Belongs to the RNA methyltransferase RlmH family.</text>
</comment>
<gene>
    <name evidence="1" type="primary">rlmH</name>
    <name type="ordered locus">Dde_2291</name>
</gene>
<proteinExistence type="inferred from homology"/>
<protein>
    <recommendedName>
        <fullName evidence="1">Ribosomal RNA large subunit methyltransferase H</fullName>
        <ecNumber evidence="1">2.1.1.177</ecNumber>
    </recommendedName>
    <alternativeName>
        <fullName evidence="1">23S rRNA (pseudouridine1915-N3)-methyltransferase</fullName>
    </alternativeName>
    <alternativeName>
        <fullName evidence="1">23S rRNA m3Psi1915 methyltransferase</fullName>
    </alternativeName>
    <alternativeName>
        <fullName evidence="1">rRNA (pseudouridine-N3-)-methyltransferase RlmH</fullName>
    </alternativeName>
</protein>